<gene>
    <name evidence="4 6" type="primary">tdcB</name>
    <name evidence="6" type="ordered locus">GSU0486</name>
</gene>
<proteinExistence type="evidence at protein level"/>
<comment type="function">
    <text evidence="3">Catalyzes the conversion of threonine to 2-oxobutanoate and ammonia. Functions in the threonine-dependent pathway of isoleucine biosynthesis, which is the minor pathway for isoleucine biosynthesis in G.sulfurreducens. Also displays serine ammonia-lyase activity, yielding pyruvate from L-serine.</text>
</comment>
<comment type="catalytic activity">
    <reaction evidence="3">
        <text>L-threonine = 2-oxobutanoate + NH4(+)</text>
        <dbReference type="Rhea" id="RHEA:22108"/>
        <dbReference type="ChEBI" id="CHEBI:16763"/>
        <dbReference type="ChEBI" id="CHEBI:28938"/>
        <dbReference type="ChEBI" id="CHEBI:57926"/>
        <dbReference type="EC" id="4.3.1.19"/>
    </reaction>
</comment>
<comment type="catalytic activity">
    <reaction evidence="3">
        <text>L-serine = pyruvate + NH4(+)</text>
        <dbReference type="Rhea" id="RHEA:19169"/>
        <dbReference type="ChEBI" id="CHEBI:15361"/>
        <dbReference type="ChEBI" id="CHEBI:28938"/>
        <dbReference type="ChEBI" id="CHEBI:33384"/>
        <dbReference type="EC" id="4.3.1.17"/>
    </reaction>
</comment>
<comment type="cofactor">
    <cofactor evidence="1">
        <name>pyridoxal 5'-phosphate</name>
        <dbReference type="ChEBI" id="CHEBI:597326"/>
    </cofactor>
</comment>
<comment type="pathway">
    <text evidence="3">Amino-acid biosynthesis; L-isoleucine biosynthesis; 2-oxobutanoate from L-threonine: step 1/1.</text>
</comment>
<comment type="disruption phenotype">
    <text evidence="3">Cells lacking this gene show undetectable threonine ammonia-lyase and serine ammonia-lyase activities. They are capable of growth in the absence of isoleucine, whereas mutants lacking both tdcB and the citramalate synthase cimA are auxotrophs for isoleucine.</text>
</comment>
<comment type="similarity">
    <text evidence="5">Belongs to the serine/threonine dehydratase family.</text>
</comment>
<sequence length="402" mass="43198">MLPYTLIQEADDRLRKRVRRTELIHSHHFSEKLGIPIYFKCENLQRTGAFKIRGALNFMTSQPREALAKGVITASAGNHAQGVAFSADLLGVPSTVFMPESTPPQKVFATRDYGAEVVLTGRNFDEAYAAAVQAQEERGALFVHPFDDPLVMAGQGTIGLEVLQELPDVANILVPIGGGGLIAGIATAIRETHPHVRIIGVETAAAPSAHYSLQKGKIVQVPVTVTLADGIAVKKPGVNTFPIIRDLVDEVVLVEEEEIALAIVALLERTKLLVEGAGAVPLAALLNRRVTDLSGKTVCVLSGGNIDVKTISVVVERGLVAAGRYLKLKVELDDLPGALARLATEIAEAKANISIITHDRRSKSLPIGKTEVLIELETRGFEHIQEVISHLQGVGYLVDVLK</sequence>
<evidence type="ECO:0000250" key="1">
    <source>
        <dbReference type="UniProtKB" id="P04968"/>
    </source>
</evidence>
<evidence type="ECO:0000255" key="2">
    <source>
        <dbReference type="PROSITE-ProRule" id="PRU01007"/>
    </source>
</evidence>
<evidence type="ECO:0000269" key="3">
    <source>
    </source>
</evidence>
<evidence type="ECO:0000303" key="4">
    <source>
    </source>
</evidence>
<evidence type="ECO:0000305" key="5"/>
<evidence type="ECO:0000312" key="6">
    <source>
        <dbReference type="EMBL" id="AAR33818.1"/>
    </source>
</evidence>
<feature type="chain" id="PRO_0000430580" description="L-threonine ammonia-lyase">
    <location>
        <begin position="1"/>
        <end position="402"/>
    </location>
</feature>
<feature type="domain" description="ACT" evidence="2">
    <location>
        <begin position="327"/>
        <end position="402"/>
    </location>
</feature>
<feature type="binding site" evidence="1">
    <location>
        <position position="78"/>
    </location>
    <ligand>
        <name>pyridoxal 5'-phosphate</name>
        <dbReference type="ChEBI" id="CHEBI:597326"/>
    </ligand>
</feature>
<feature type="binding site" evidence="1">
    <location>
        <begin position="178"/>
        <end position="181"/>
    </location>
    <ligand>
        <name>pyridoxal 5'-phosphate</name>
        <dbReference type="ChEBI" id="CHEBI:597326"/>
    </ligand>
</feature>
<feature type="binding site" evidence="1">
    <location>
        <position position="302"/>
    </location>
    <ligand>
        <name>pyridoxal 5'-phosphate</name>
        <dbReference type="ChEBI" id="CHEBI:597326"/>
    </ligand>
</feature>
<feature type="modified residue" description="N6-(pyridoxal phosphate)lysine" evidence="1">
    <location>
        <position position="51"/>
    </location>
</feature>
<dbReference type="EC" id="4.3.1.19" evidence="3"/>
<dbReference type="EC" id="4.3.1.17" evidence="3"/>
<dbReference type="EMBL" id="AE017180">
    <property type="protein sequence ID" value="AAR33818.1"/>
    <property type="molecule type" value="Genomic_DNA"/>
</dbReference>
<dbReference type="RefSeq" id="NP_951545.1">
    <property type="nucleotide sequence ID" value="NC_002939.5"/>
</dbReference>
<dbReference type="SMR" id="Q74FW6"/>
<dbReference type="FunCoup" id="Q74FW6">
    <property type="interactions" value="416"/>
</dbReference>
<dbReference type="STRING" id="243231.GSU0486"/>
<dbReference type="EnsemblBacteria" id="AAR33818">
    <property type="protein sequence ID" value="AAR33818"/>
    <property type="gene ID" value="GSU0486"/>
</dbReference>
<dbReference type="KEGG" id="gsu:GSU0486"/>
<dbReference type="PATRIC" id="fig|243231.5.peg.485"/>
<dbReference type="eggNOG" id="COG1171">
    <property type="taxonomic scope" value="Bacteria"/>
</dbReference>
<dbReference type="HOGENOM" id="CLU_021152_4_1_7"/>
<dbReference type="InParanoid" id="Q74FW6"/>
<dbReference type="OrthoDB" id="9811476at2"/>
<dbReference type="BRENDA" id="4.3.1.19">
    <property type="organism ID" value="7676"/>
</dbReference>
<dbReference type="UniPathway" id="UPA00047">
    <property type="reaction ID" value="UER00054"/>
</dbReference>
<dbReference type="Proteomes" id="UP000000577">
    <property type="component" value="Chromosome"/>
</dbReference>
<dbReference type="GO" id="GO:0003941">
    <property type="term" value="F:L-serine ammonia-lyase activity"/>
    <property type="evidence" value="ECO:0000318"/>
    <property type="project" value="GO_Central"/>
</dbReference>
<dbReference type="GO" id="GO:0030170">
    <property type="term" value="F:pyridoxal phosphate binding"/>
    <property type="evidence" value="ECO:0007669"/>
    <property type="project" value="InterPro"/>
</dbReference>
<dbReference type="GO" id="GO:0004794">
    <property type="term" value="F:threonine deaminase activity"/>
    <property type="evidence" value="ECO:0007669"/>
    <property type="project" value="UniProtKB-EC"/>
</dbReference>
<dbReference type="GO" id="GO:0009097">
    <property type="term" value="P:isoleucine biosynthetic process"/>
    <property type="evidence" value="ECO:0007669"/>
    <property type="project" value="UniProtKB-UniPathway"/>
</dbReference>
<dbReference type="GO" id="GO:0006565">
    <property type="term" value="P:L-serine catabolic process"/>
    <property type="evidence" value="ECO:0000318"/>
    <property type="project" value="GO_Central"/>
</dbReference>
<dbReference type="GO" id="GO:0006567">
    <property type="term" value="P:threonine catabolic process"/>
    <property type="evidence" value="ECO:0007669"/>
    <property type="project" value="InterPro"/>
</dbReference>
<dbReference type="CDD" id="cd04886">
    <property type="entry name" value="ACT_ThrD-II-like"/>
    <property type="match status" value="1"/>
</dbReference>
<dbReference type="CDD" id="cd01562">
    <property type="entry name" value="Thr-dehyd"/>
    <property type="match status" value="1"/>
</dbReference>
<dbReference type="FunFam" id="3.40.50.1100:FF:000007">
    <property type="entry name" value="L-threonine dehydratase catabolic TdcB"/>
    <property type="match status" value="1"/>
</dbReference>
<dbReference type="FunFam" id="3.40.50.1100:FF:000005">
    <property type="entry name" value="Threonine dehydratase catabolic"/>
    <property type="match status" value="1"/>
</dbReference>
<dbReference type="Gene3D" id="3.30.70.260">
    <property type="match status" value="1"/>
</dbReference>
<dbReference type="Gene3D" id="3.40.50.1100">
    <property type="match status" value="2"/>
</dbReference>
<dbReference type="InterPro" id="IPR045865">
    <property type="entry name" value="ACT-like_dom_sf"/>
</dbReference>
<dbReference type="InterPro" id="IPR002912">
    <property type="entry name" value="ACT_dom"/>
</dbReference>
<dbReference type="InterPro" id="IPR044561">
    <property type="entry name" value="ACT_ThrD-II-like"/>
</dbReference>
<dbReference type="InterPro" id="IPR050147">
    <property type="entry name" value="Ser/Thr_Dehydratase"/>
</dbReference>
<dbReference type="InterPro" id="IPR000634">
    <property type="entry name" value="Ser/Thr_deHydtase_PyrdxlP-BS"/>
</dbReference>
<dbReference type="InterPro" id="IPR005789">
    <property type="entry name" value="Thr_deHydtase_catblc"/>
</dbReference>
<dbReference type="InterPro" id="IPR001926">
    <property type="entry name" value="TrpB-like_PALP"/>
</dbReference>
<dbReference type="InterPro" id="IPR036052">
    <property type="entry name" value="TrpB-like_PALP_sf"/>
</dbReference>
<dbReference type="NCBIfam" id="TIGR01127">
    <property type="entry name" value="ilvA_1Cterm"/>
    <property type="match status" value="1"/>
</dbReference>
<dbReference type="PANTHER" id="PTHR48078:SF6">
    <property type="entry name" value="L-THREONINE DEHYDRATASE CATABOLIC TDCB"/>
    <property type="match status" value="1"/>
</dbReference>
<dbReference type="PANTHER" id="PTHR48078">
    <property type="entry name" value="THREONINE DEHYDRATASE, MITOCHONDRIAL-RELATED"/>
    <property type="match status" value="1"/>
</dbReference>
<dbReference type="Pfam" id="PF00291">
    <property type="entry name" value="PALP"/>
    <property type="match status" value="1"/>
</dbReference>
<dbReference type="SUPFAM" id="SSF55021">
    <property type="entry name" value="ACT-like"/>
    <property type="match status" value="1"/>
</dbReference>
<dbReference type="SUPFAM" id="SSF53686">
    <property type="entry name" value="Tryptophan synthase beta subunit-like PLP-dependent enzymes"/>
    <property type="match status" value="1"/>
</dbReference>
<dbReference type="PROSITE" id="PS51671">
    <property type="entry name" value="ACT"/>
    <property type="match status" value="1"/>
</dbReference>
<dbReference type="PROSITE" id="PS00165">
    <property type="entry name" value="DEHYDRATASE_SER_THR"/>
    <property type="match status" value="1"/>
</dbReference>
<accession>Q74FW6</accession>
<keyword id="KW-0028">Amino-acid biosynthesis</keyword>
<keyword id="KW-0100">Branched-chain amino acid biosynthesis</keyword>
<keyword id="KW-0412">Isoleucine biosynthesis</keyword>
<keyword id="KW-0456">Lyase</keyword>
<keyword id="KW-0663">Pyridoxal phosphate</keyword>
<keyword id="KW-1185">Reference proteome</keyword>
<name>TSAL_GEOSL</name>
<protein>
    <recommendedName>
        <fullName evidence="4">L-threonine ammonia-lyase</fullName>
        <ecNumber evidence="3">4.3.1.19</ecNumber>
    </recommendedName>
    <alternativeName>
        <fullName evidence="4">L-serine ammonia-lyase</fullName>
        <ecNumber evidence="3">4.3.1.17</ecNumber>
    </alternativeName>
    <alternativeName>
        <fullName evidence="4">Threonine/serine ammonia-lyase</fullName>
    </alternativeName>
</protein>
<organism>
    <name type="scientific">Geobacter sulfurreducens (strain ATCC 51573 / DSM 12127 / PCA)</name>
    <dbReference type="NCBI Taxonomy" id="243231"/>
    <lineage>
        <taxon>Bacteria</taxon>
        <taxon>Pseudomonadati</taxon>
        <taxon>Thermodesulfobacteriota</taxon>
        <taxon>Desulfuromonadia</taxon>
        <taxon>Geobacterales</taxon>
        <taxon>Geobacteraceae</taxon>
        <taxon>Geobacter</taxon>
    </lineage>
</organism>
<reference key="1">
    <citation type="journal article" date="2003" name="Science">
        <title>Genome of Geobacter sulfurreducens: metal reduction in subsurface environments.</title>
        <authorList>
            <person name="Methe B.A."/>
            <person name="Nelson K.E."/>
            <person name="Eisen J.A."/>
            <person name="Paulsen I.T."/>
            <person name="Nelson W.C."/>
            <person name="Heidelberg J.F."/>
            <person name="Wu D."/>
            <person name="Wu M."/>
            <person name="Ward N.L."/>
            <person name="Beanan M.J."/>
            <person name="Dodson R.J."/>
            <person name="Madupu R."/>
            <person name="Brinkac L.M."/>
            <person name="Daugherty S.C."/>
            <person name="DeBoy R.T."/>
            <person name="Durkin A.S."/>
            <person name="Gwinn M.L."/>
            <person name="Kolonay J.F."/>
            <person name="Sullivan S.A."/>
            <person name="Haft D.H."/>
            <person name="Selengut J."/>
            <person name="Davidsen T.M."/>
            <person name="Zafar N."/>
            <person name="White O."/>
            <person name="Tran B."/>
            <person name="Romero C."/>
            <person name="Forberger H.A."/>
            <person name="Weidman J.F."/>
            <person name="Khouri H.M."/>
            <person name="Feldblyum T.V."/>
            <person name="Utterback T.R."/>
            <person name="Van Aken S.E."/>
            <person name="Lovley D.R."/>
            <person name="Fraser C.M."/>
        </authorList>
    </citation>
    <scope>NUCLEOTIDE SEQUENCE [LARGE SCALE GENOMIC DNA]</scope>
    <source>
        <strain>ATCC 51573 / DSM 12127 / PCA</strain>
    </source>
</reference>
<reference key="2">
    <citation type="journal article" date="2008" name="J. Bacteriol.">
        <title>Elucidation of an alternate isoleucine biosynthesis pathway in Geobacter sulfurreducens.</title>
        <authorList>
            <person name="Risso C."/>
            <person name="Van Dien S.J."/>
            <person name="Orloff A."/>
            <person name="Lovley D.R."/>
            <person name="Coppi M.V."/>
        </authorList>
    </citation>
    <scope>FUNCTION</scope>
    <scope>CATALYTIC ACTIVITY</scope>
    <scope>DISRUPTION PHENOTYPE</scope>
    <scope>PATHWAY</scope>
    <source>
        <strain>ATCC 51573 / DSM 12127 / PCA</strain>
    </source>
</reference>